<evidence type="ECO:0000250" key="1"/>
<evidence type="ECO:0000250" key="2">
    <source>
        <dbReference type="UniProtKB" id="O97943"/>
    </source>
</evidence>
<evidence type="ECO:0000250" key="3">
    <source>
        <dbReference type="UniProtKB" id="P02662"/>
    </source>
</evidence>
<evidence type="ECO:0000250" key="4">
    <source>
        <dbReference type="UniProtKB" id="P04653"/>
    </source>
</evidence>
<evidence type="ECO:0000250" key="5">
    <source>
        <dbReference type="UniProtKB" id="P18626"/>
    </source>
</evidence>
<evidence type="ECO:0000250" key="6">
    <source>
        <dbReference type="UniProtKB" id="P47710"/>
    </source>
</evidence>
<evidence type="ECO:0000256" key="7">
    <source>
        <dbReference type="SAM" id="MobiDB-lite"/>
    </source>
</evidence>
<evidence type="ECO:0000305" key="8"/>
<sequence>MKLLIFICLAAVALARPKPPLRHQEHLQNEPDSREELFKERKFLRFPEVPLLSQFRQEIINELNRNHGMEGHEQRGSSSSSSEEVVGNSAEQKHVQKEEDVPSQSYLGHLQGLNKYKLRQLEAIHDQELHRTNEDKHTQQGEPMKGVNQEQAYFYFEPLHQFYQLDAYPYATWYYPPQYIAHPLFTNIPQPTAPEKGGKTEIMPQW</sequence>
<reference key="1">
    <citation type="journal article" date="1992" name="Anim. Genet.">
        <title>The sequence of porcine alpha s1-casein cDNA: evidence for protein variants generated by altered RNA splicing.</title>
        <authorList>
            <person name="Alexander L.J."/>
            <person name="Beattie C.W."/>
        </authorList>
    </citation>
    <scope>NUCLEOTIDE SEQUENCE [MRNA]</scope>
    <source>
        <tissue>Mammary gland</tissue>
    </source>
</reference>
<proteinExistence type="evidence at transcript level"/>
<protein>
    <recommendedName>
        <fullName>Alpha-S1-casein</fullName>
    </recommendedName>
</protein>
<organism>
    <name type="scientific">Sus scrofa</name>
    <name type="common">Pig</name>
    <dbReference type="NCBI Taxonomy" id="9823"/>
    <lineage>
        <taxon>Eukaryota</taxon>
        <taxon>Metazoa</taxon>
        <taxon>Chordata</taxon>
        <taxon>Craniata</taxon>
        <taxon>Vertebrata</taxon>
        <taxon>Euteleostomi</taxon>
        <taxon>Mammalia</taxon>
        <taxon>Eutheria</taxon>
        <taxon>Laurasiatheria</taxon>
        <taxon>Artiodactyla</taxon>
        <taxon>Suina</taxon>
        <taxon>Suidae</taxon>
        <taxon>Sus</taxon>
    </lineage>
</organism>
<accession>P39035</accession>
<comment type="function">
    <text>Important role in the capacity of milk to transport calcium phosphate.</text>
</comment>
<comment type="subcellular location">
    <subcellularLocation>
        <location>Secreted</location>
    </subcellularLocation>
</comment>
<comment type="tissue specificity">
    <text>Mammary gland specific. Secreted in milk.</text>
</comment>
<comment type="similarity">
    <text evidence="8">Belongs to the alpha-casein family.</text>
</comment>
<gene>
    <name type="primary">CSN1S1</name>
</gene>
<keyword id="KW-0494">Milk protein</keyword>
<keyword id="KW-0597">Phosphoprotein</keyword>
<keyword id="KW-1185">Reference proteome</keyword>
<keyword id="KW-0964">Secreted</keyword>
<keyword id="KW-0732">Signal</keyword>
<feature type="signal peptide" evidence="1">
    <location>
        <begin position="1"/>
        <end position="15"/>
    </location>
</feature>
<feature type="chain" id="PRO_0000004453" description="Alpha-S1-casein">
    <location>
        <begin position="16"/>
        <end position="206"/>
    </location>
</feature>
<feature type="region of interest" description="Disordered" evidence="7">
    <location>
        <begin position="67"/>
        <end position="106"/>
    </location>
</feature>
<feature type="compositionally biased region" description="Basic and acidic residues" evidence="7">
    <location>
        <begin position="91"/>
        <end position="100"/>
    </location>
</feature>
<feature type="modified residue" description="Phosphoserine" evidence="2">
    <location>
        <position position="33"/>
    </location>
</feature>
<feature type="modified residue" description="Phosphoserine" evidence="6">
    <location>
        <position position="77"/>
    </location>
</feature>
<feature type="modified residue" description="Phosphoserine" evidence="4">
    <location>
        <position position="78"/>
    </location>
</feature>
<feature type="modified residue" description="Phosphoserine" evidence="5">
    <location>
        <position position="79"/>
    </location>
</feature>
<feature type="modified residue" description="Phosphoserine" evidence="4">
    <location>
        <position position="80"/>
    </location>
</feature>
<feature type="modified residue" description="Phosphoserine" evidence="3">
    <location>
        <position position="81"/>
    </location>
</feature>
<feature type="modified residue" description="Phosphoserine" evidence="4">
    <location>
        <position position="82"/>
    </location>
</feature>
<feature type="modified residue" description="Phosphoserine" evidence="3">
    <location>
        <position position="89"/>
    </location>
</feature>
<name>CASA1_PIG</name>
<dbReference type="EMBL" id="X54973">
    <property type="protein sequence ID" value="CAA38717.1"/>
    <property type="molecule type" value="mRNA"/>
</dbReference>
<dbReference type="PIR" id="A45661">
    <property type="entry name" value="A45661"/>
</dbReference>
<dbReference type="RefSeq" id="NP_001004029.1">
    <property type="nucleotide sequence ID" value="NM_001004029.2"/>
</dbReference>
<dbReference type="FunCoup" id="P39035">
    <property type="interactions" value="1"/>
</dbReference>
<dbReference type="PaxDb" id="9823-ENSSSCP00000009877"/>
<dbReference type="PeptideAtlas" id="P39035"/>
<dbReference type="GeneID" id="445514"/>
<dbReference type="KEGG" id="ssc:445514"/>
<dbReference type="CTD" id="1446"/>
<dbReference type="eggNOG" id="ENOG502TEWT">
    <property type="taxonomic scope" value="Eukaryota"/>
</dbReference>
<dbReference type="HOGENOM" id="CLU_126070_0_0_1"/>
<dbReference type="InParanoid" id="P39035"/>
<dbReference type="OMA" id="AYLPAPW"/>
<dbReference type="OrthoDB" id="9635074at2759"/>
<dbReference type="TreeFam" id="TF340763"/>
<dbReference type="Proteomes" id="UP000008227">
    <property type="component" value="Unplaced"/>
</dbReference>
<dbReference type="Proteomes" id="UP000314985">
    <property type="component" value="Unplaced"/>
</dbReference>
<dbReference type="Proteomes" id="UP000694570">
    <property type="component" value="Unplaced"/>
</dbReference>
<dbReference type="Proteomes" id="UP000694571">
    <property type="component" value="Unplaced"/>
</dbReference>
<dbReference type="Proteomes" id="UP000694720">
    <property type="component" value="Unplaced"/>
</dbReference>
<dbReference type="Proteomes" id="UP000694722">
    <property type="component" value="Unplaced"/>
</dbReference>
<dbReference type="Proteomes" id="UP000694723">
    <property type="component" value="Unplaced"/>
</dbReference>
<dbReference type="Proteomes" id="UP000694724">
    <property type="component" value="Unplaced"/>
</dbReference>
<dbReference type="Proteomes" id="UP000694725">
    <property type="component" value="Unplaced"/>
</dbReference>
<dbReference type="Proteomes" id="UP000694726">
    <property type="component" value="Unplaced"/>
</dbReference>
<dbReference type="Proteomes" id="UP000694727">
    <property type="component" value="Unplaced"/>
</dbReference>
<dbReference type="Proteomes" id="UP000694728">
    <property type="component" value="Unplaced"/>
</dbReference>
<dbReference type="GO" id="GO:0005615">
    <property type="term" value="C:extracellular space"/>
    <property type="evidence" value="ECO:0000318"/>
    <property type="project" value="GO_Central"/>
</dbReference>
<dbReference type="GO" id="GO:1903496">
    <property type="term" value="P:response to 11-deoxycorticosterone"/>
    <property type="evidence" value="ECO:0000318"/>
    <property type="project" value="GO_Central"/>
</dbReference>
<dbReference type="GO" id="GO:1903494">
    <property type="term" value="P:response to dehydroepiandrosterone"/>
    <property type="evidence" value="ECO:0000318"/>
    <property type="project" value="GO_Central"/>
</dbReference>
<dbReference type="GO" id="GO:0032355">
    <property type="term" value="P:response to estradiol"/>
    <property type="evidence" value="ECO:0000318"/>
    <property type="project" value="GO_Central"/>
</dbReference>
<dbReference type="GO" id="GO:0032570">
    <property type="term" value="P:response to progesterone"/>
    <property type="evidence" value="ECO:0000318"/>
    <property type="project" value="GO_Central"/>
</dbReference>
<dbReference type="InterPro" id="IPR026999">
    <property type="entry name" value="Alpha-s1_casein"/>
</dbReference>
<dbReference type="InterPro" id="IPR001588">
    <property type="entry name" value="Casein"/>
</dbReference>
<dbReference type="PANTHER" id="PTHR10240">
    <property type="entry name" value="ALPHA-S1-CASEIN"/>
    <property type="match status" value="1"/>
</dbReference>
<dbReference type="PANTHER" id="PTHR10240:SF0">
    <property type="entry name" value="ALPHA-S1-CASEIN"/>
    <property type="match status" value="1"/>
</dbReference>
<dbReference type="Pfam" id="PF00363">
    <property type="entry name" value="Casein"/>
    <property type="match status" value="1"/>
</dbReference>